<comment type="function">
    <text evidence="1">Deubiquitinating enzyme that removes conjugated ubiquitin from specific proteins to regulate different cellular processes that may include cell proliferation, progression through the cell cycle, apoptosis, cell migration, and the cellular response to viral infection.</text>
</comment>
<comment type="catalytic activity">
    <reaction>
        <text>Thiol-dependent hydrolysis of ester, thioester, amide, peptide and isopeptide bonds formed by the C-terminal Gly of ubiquitin (a 76-residue protein attached to proteins as an intracellular targeting signal).</text>
        <dbReference type="EC" id="3.4.19.12"/>
    </reaction>
</comment>
<comment type="subcellular location">
    <subcellularLocation>
        <location evidence="1">Nucleus</location>
    </subcellularLocation>
    <subcellularLocation>
        <location evidence="1">Endoplasmic reticulum</location>
    </subcellularLocation>
</comment>
<comment type="similarity">
    <text evidence="5">Belongs to the peptidase C19 family. USP17 subfamily.</text>
</comment>
<comment type="caution">
    <text evidence="5">The RS447 megasatellite DNA is a highly polymorphic conserved tandem repetitive sequence which contains a copy of the USP17 gene. It is present with an interindividual variation in copy number, ranging from 20 to 103, and can be found in the genome on chromosome 4 and chromosome 8. The high similarity between the UPS17-like genes makes it impossible to specifically assign data to a particular gene of the family. Oligonucleotides designed in RNAi experiments are for instance not specific for a given UPS17-like gene.</text>
</comment>
<keyword id="KW-0256">Endoplasmic reticulum</keyword>
<keyword id="KW-0378">Hydrolase</keyword>
<keyword id="KW-0539">Nucleus</keyword>
<keyword id="KW-0645">Protease</keyword>
<keyword id="KW-1185">Reference proteome</keyword>
<keyword id="KW-0788">Thiol protease</keyword>
<keyword id="KW-0833">Ubl conjugation pathway</keyword>
<gene>
    <name type="primary">USP17L12</name>
</gene>
<accession>C9JPN9</accession>
<protein>
    <recommendedName>
        <fullName>Ubiquitin carboxyl-terminal hydrolase 17-like protein 12</fullName>
        <ecNumber>3.4.19.12</ecNumber>
    </recommendedName>
</protein>
<evidence type="ECO:0000250" key="1"/>
<evidence type="ECO:0000255" key="2">
    <source>
        <dbReference type="PROSITE-ProRule" id="PRU10092"/>
    </source>
</evidence>
<evidence type="ECO:0000255" key="3">
    <source>
        <dbReference type="PROSITE-ProRule" id="PRU10093"/>
    </source>
</evidence>
<evidence type="ECO:0000256" key="4">
    <source>
        <dbReference type="SAM" id="MobiDB-lite"/>
    </source>
</evidence>
<evidence type="ECO:0000305" key="5"/>
<proteinExistence type="inferred from homology"/>
<feature type="chain" id="PRO_0000421088" description="Ubiquitin carboxyl-terminal hydrolase 17-like protein 12">
    <location>
        <begin position="1"/>
        <end position="530"/>
    </location>
</feature>
<feature type="domain" description="USP">
    <location>
        <begin position="80"/>
        <end position="375"/>
    </location>
</feature>
<feature type="region of interest" description="Disordered" evidence="4">
    <location>
        <begin position="382"/>
        <end position="412"/>
    </location>
</feature>
<feature type="region of interest" description="Disordered" evidence="4">
    <location>
        <begin position="477"/>
        <end position="530"/>
    </location>
</feature>
<feature type="compositionally biased region" description="Basic and acidic residues" evidence="4">
    <location>
        <begin position="382"/>
        <end position="392"/>
    </location>
</feature>
<feature type="compositionally biased region" description="Basic and acidic residues" evidence="4">
    <location>
        <begin position="398"/>
        <end position="412"/>
    </location>
</feature>
<feature type="compositionally biased region" description="Low complexity" evidence="4">
    <location>
        <begin position="484"/>
        <end position="495"/>
    </location>
</feature>
<feature type="compositionally biased region" description="Polar residues" evidence="4">
    <location>
        <begin position="496"/>
        <end position="505"/>
    </location>
</feature>
<feature type="compositionally biased region" description="Basic residues" evidence="4">
    <location>
        <begin position="510"/>
        <end position="524"/>
    </location>
</feature>
<feature type="active site" description="Nucleophile" evidence="2 3">
    <location>
        <position position="89"/>
    </location>
</feature>
<feature type="active site" description="Proton acceptor" evidence="2 3">
    <location>
        <position position="334"/>
    </location>
</feature>
<name>UL17C_HUMAN</name>
<reference key="1">
    <citation type="journal article" date="2005" name="Nature">
        <title>Generation and annotation of the DNA sequences of human chromosomes 2 and 4.</title>
        <authorList>
            <person name="Hillier L.W."/>
            <person name="Graves T.A."/>
            <person name="Fulton R.S."/>
            <person name="Fulton L.A."/>
            <person name="Pepin K.H."/>
            <person name="Minx P."/>
            <person name="Wagner-McPherson C."/>
            <person name="Layman D."/>
            <person name="Wylie K."/>
            <person name="Sekhon M."/>
            <person name="Becker M.C."/>
            <person name="Fewell G.A."/>
            <person name="Delehaunty K.D."/>
            <person name="Miner T.L."/>
            <person name="Nash W.E."/>
            <person name="Kremitzki C."/>
            <person name="Oddy L."/>
            <person name="Du H."/>
            <person name="Sun H."/>
            <person name="Bradshaw-Cordum H."/>
            <person name="Ali J."/>
            <person name="Carter J."/>
            <person name="Cordes M."/>
            <person name="Harris A."/>
            <person name="Isak A."/>
            <person name="van Brunt A."/>
            <person name="Nguyen C."/>
            <person name="Du F."/>
            <person name="Courtney L."/>
            <person name="Kalicki J."/>
            <person name="Ozersky P."/>
            <person name="Abbott S."/>
            <person name="Armstrong J."/>
            <person name="Belter E.A."/>
            <person name="Caruso L."/>
            <person name="Cedroni M."/>
            <person name="Cotton M."/>
            <person name="Davidson T."/>
            <person name="Desai A."/>
            <person name="Elliott G."/>
            <person name="Erb T."/>
            <person name="Fronick C."/>
            <person name="Gaige T."/>
            <person name="Haakenson W."/>
            <person name="Haglund K."/>
            <person name="Holmes A."/>
            <person name="Harkins R."/>
            <person name="Kim K."/>
            <person name="Kruchowski S.S."/>
            <person name="Strong C.M."/>
            <person name="Grewal N."/>
            <person name="Goyea E."/>
            <person name="Hou S."/>
            <person name="Levy A."/>
            <person name="Martinka S."/>
            <person name="Mead K."/>
            <person name="McLellan M.D."/>
            <person name="Meyer R."/>
            <person name="Randall-Maher J."/>
            <person name="Tomlinson C."/>
            <person name="Dauphin-Kohlberg S."/>
            <person name="Kozlowicz-Reilly A."/>
            <person name="Shah N."/>
            <person name="Swearengen-Shahid S."/>
            <person name="Snider J."/>
            <person name="Strong J.T."/>
            <person name="Thompson J."/>
            <person name="Yoakum M."/>
            <person name="Leonard S."/>
            <person name="Pearman C."/>
            <person name="Trani L."/>
            <person name="Radionenko M."/>
            <person name="Waligorski J.E."/>
            <person name="Wang C."/>
            <person name="Rock S.M."/>
            <person name="Tin-Wollam A.-M."/>
            <person name="Maupin R."/>
            <person name="Latreille P."/>
            <person name="Wendl M.C."/>
            <person name="Yang S.-P."/>
            <person name="Pohl C."/>
            <person name="Wallis J.W."/>
            <person name="Spieth J."/>
            <person name="Bieri T.A."/>
            <person name="Berkowicz N."/>
            <person name="Nelson J.O."/>
            <person name="Osborne J."/>
            <person name="Ding L."/>
            <person name="Meyer R."/>
            <person name="Sabo A."/>
            <person name="Shotland Y."/>
            <person name="Sinha P."/>
            <person name="Wohldmann P.E."/>
            <person name="Cook L.L."/>
            <person name="Hickenbotham M.T."/>
            <person name="Eldred J."/>
            <person name="Williams D."/>
            <person name="Jones T.A."/>
            <person name="She X."/>
            <person name="Ciccarelli F.D."/>
            <person name="Izaurralde E."/>
            <person name="Taylor J."/>
            <person name="Schmutz J."/>
            <person name="Myers R.M."/>
            <person name="Cox D.R."/>
            <person name="Huang X."/>
            <person name="McPherson J.D."/>
            <person name="Mardis E.R."/>
            <person name="Clifton S.W."/>
            <person name="Warren W.C."/>
            <person name="Chinwalla A.T."/>
            <person name="Eddy S.R."/>
            <person name="Marra M.A."/>
            <person name="Ovcharenko I."/>
            <person name="Furey T.S."/>
            <person name="Miller W."/>
            <person name="Eichler E.E."/>
            <person name="Bork P."/>
            <person name="Suyama M."/>
            <person name="Torrents D."/>
            <person name="Waterston R.H."/>
            <person name="Wilson R.K."/>
        </authorList>
    </citation>
    <scope>NUCLEOTIDE SEQUENCE [LARGE SCALE GENOMIC DNA]</scope>
</reference>
<dbReference type="EC" id="3.4.19.12"/>
<dbReference type="EMBL" id="AC108519">
    <property type="status" value="NOT_ANNOTATED_CDS"/>
    <property type="molecule type" value="Genomic_DNA"/>
</dbReference>
<dbReference type="CCDS" id="CCDS59456.1"/>
<dbReference type="RefSeq" id="NP_001243782.1">
    <property type="nucleotide sequence ID" value="NM_001256853.1"/>
</dbReference>
<dbReference type="SMR" id="C9JPN9"/>
<dbReference type="BioGRID" id="938867">
    <property type="interactions" value="3"/>
</dbReference>
<dbReference type="FunCoup" id="C9JPN9">
    <property type="interactions" value="447"/>
</dbReference>
<dbReference type="IntAct" id="C9JPN9">
    <property type="interactions" value="1"/>
</dbReference>
<dbReference type="STRING" id="9606.ENSP00000389443"/>
<dbReference type="MEROPS" id="C19.A82"/>
<dbReference type="MEROPS" id="C19.A89"/>
<dbReference type="iPTMnet" id="C9JPN9"/>
<dbReference type="PhosphoSitePlus" id="C9JPN9"/>
<dbReference type="BioMuta" id="USP17L12"/>
<dbReference type="jPOST" id="C9JPN9"/>
<dbReference type="MassIVE" id="C9JPN9"/>
<dbReference type="PaxDb" id="9606-ENSP00000389443"/>
<dbReference type="Antibodypedia" id="71846">
    <property type="antibodies" value="3 antibodies from 1 providers"/>
</dbReference>
<dbReference type="DNASU" id="100287205"/>
<dbReference type="Ensembl" id="ENST00000415041.1">
    <property type="protein sequence ID" value="ENSP00000389443.1"/>
    <property type="gene ID" value="ENSG00000227551.1"/>
</dbReference>
<dbReference type="GeneID" id="100287205"/>
<dbReference type="KEGG" id="hsa:100287205"/>
<dbReference type="MANE-Select" id="ENST00000415041.1">
    <property type="protein sequence ID" value="ENSP00000389443.1"/>
    <property type="RefSeq nucleotide sequence ID" value="NM_001256853.1"/>
    <property type="RefSeq protein sequence ID" value="NP_001243782.1"/>
</dbReference>
<dbReference type="UCSC" id="uc031sdi.1">
    <property type="organism name" value="human"/>
</dbReference>
<dbReference type="AGR" id="HGNC:44440"/>
<dbReference type="CTD" id="100287205"/>
<dbReference type="GeneCards" id="USP17L12"/>
<dbReference type="HGNC" id="HGNC:44440">
    <property type="gene designation" value="USP17L12"/>
</dbReference>
<dbReference type="HPA" id="ENSG00000227551">
    <property type="expression patterns" value="Not detected"/>
</dbReference>
<dbReference type="neXtProt" id="NX_C9JPN9"/>
<dbReference type="VEuPathDB" id="HostDB:ENSG00000227551"/>
<dbReference type="eggNOG" id="KOG1865">
    <property type="taxonomic scope" value="Eukaryota"/>
</dbReference>
<dbReference type="GeneTree" id="ENSGT00940000161948"/>
<dbReference type="HOGENOM" id="CLU_008279_10_0_1"/>
<dbReference type="InParanoid" id="C9JPN9"/>
<dbReference type="OrthoDB" id="8832at9604"/>
<dbReference type="PAN-GO" id="C9JPN9">
    <property type="GO annotations" value="6 GO annotations based on evolutionary models"/>
</dbReference>
<dbReference type="PhylomeDB" id="C9JPN9"/>
<dbReference type="TreeFam" id="TF315281"/>
<dbReference type="PathwayCommons" id="C9JPN9"/>
<dbReference type="Reactome" id="R-HSA-5689880">
    <property type="pathway name" value="Ub-specific processing proteases"/>
</dbReference>
<dbReference type="BioGRID-ORCS" id="100287205">
    <property type="hits" value="48 hits in 579 CRISPR screens"/>
</dbReference>
<dbReference type="GenomeRNAi" id="100287205"/>
<dbReference type="Pharos" id="C9JPN9">
    <property type="development level" value="Tdark"/>
</dbReference>
<dbReference type="PRO" id="PR:C9JPN9"/>
<dbReference type="Proteomes" id="UP000005640">
    <property type="component" value="Chromosome 4"/>
</dbReference>
<dbReference type="RNAct" id="C9JPN9">
    <property type="molecule type" value="protein"/>
</dbReference>
<dbReference type="GO" id="GO:0005829">
    <property type="term" value="C:cytosol"/>
    <property type="evidence" value="ECO:0000318"/>
    <property type="project" value="GO_Central"/>
</dbReference>
<dbReference type="GO" id="GO:0005783">
    <property type="term" value="C:endoplasmic reticulum"/>
    <property type="evidence" value="ECO:0007669"/>
    <property type="project" value="UniProtKB-SubCell"/>
</dbReference>
<dbReference type="GO" id="GO:0005634">
    <property type="term" value="C:nucleus"/>
    <property type="evidence" value="ECO:0000318"/>
    <property type="project" value="GO_Central"/>
</dbReference>
<dbReference type="GO" id="GO:0004843">
    <property type="term" value="F:cysteine-type deubiquitinase activity"/>
    <property type="evidence" value="ECO:0000318"/>
    <property type="project" value="GO_Central"/>
</dbReference>
<dbReference type="GO" id="GO:0016579">
    <property type="term" value="P:protein deubiquitination"/>
    <property type="evidence" value="ECO:0007669"/>
    <property type="project" value="InterPro"/>
</dbReference>
<dbReference type="GO" id="GO:0006508">
    <property type="term" value="P:proteolysis"/>
    <property type="evidence" value="ECO:0007669"/>
    <property type="project" value="UniProtKB-KW"/>
</dbReference>
<dbReference type="GO" id="GO:0042981">
    <property type="term" value="P:regulation of apoptotic process"/>
    <property type="evidence" value="ECO:0000318"/>
    <property type="project" value="GO_Central"/>
</dbReference>
<dbReference type="GO" id="GO:0031647">
    <property type="term" value="P:regulation of protein stability"/>
    <property type="evidence" value="ECO:0000318"/>
    <property type="project" value="GO_Central"/>
</dbReference>
<dbReference type="CDD" id="cd02661">
    <property type="entry name" value="Peptidase_C19E"/>
    <property type="match status" value="1"/>
</dbReference>
<dbReference type="FunFam" id="3.90.70.10:FF:000070">
    <property type="entry name" value="Ubiquitin carboxyl-terminal hydrolase 17-like protein 17"/>
    <property type="match status" value="1"/>
</dbReference>
<dbReference type="Gene3D" id="3.90.70.10">
    <property type="entry name" value="Cysteine proteinases"/>
    <property type="match status" value="1"/>
</dbReference>
<dbReference type="InterPro" id="IPR006861">
    <property type="entry name" value="HABP4_PAIRBP1-bd"/>
</dbReference>
<dbReference type="InterPro" id="IPR038765">
    <property type="entry name" value="Papain-like_cys_pep_sf"/>
</dbReference>
<dbReference type="InterPro" id="IPR050164">
    <property type="entry name" value="Peptidase_C19"/>
</dbReference>
<dbReference type="InterPro" id="IPR001394">
    <property type="entry name" value="Peptidase_C19_UCH"/>
</dbReference>
<dbReference type="InterPro" id="IPR018200">
    <property type="entry name" value="USP_CS"/>
</dbReference>
<dbReference type="InterPro" id="IPR028889">
    <property type="entry name" value="USP_dom"/>
</dbReference>
<dbReference type="PANTHER" id="PTHR24006:SF651">
    <property type="entry name" value="INACTIVE UBIQUITIN CARBOXYL-TERMINAL HYDROLASE 17-LIKE PROTEIN 4-RELATED"/>
    <property type="match status" value="1"/>
</dbReference>
<dbReference type="PANTHER" id="PTHR24006">
    <property type="entry name" value="UBIQUITIN CARBOXYL-TERMINAL HYDROLASE"/>
    <property type="match status" value="1"/>
</dbReference>
<dbReference type="Pfam" id="PF04774">
    <property type="entry name" value="HABP4_PAI-RBP1"/>
    <property type="match status" value="1"/>
</dbReference>
<dbReference type="Pfam" id="PF00443">
    <property type="entry name" value="UCH"/>
    <property type="match status" value="1"/>
</dbReference>
<dbReference type="SUPFAM" id="SSF54001">
    <property type="entry name" value="Cysteine proteinases"/>
    <property type="match status" value="1"/>
</dbReference>
<dbReference type="PROSITE" id="PS00972">
    <property type="entry name" value="USP_1"/>
    <property type="match status" value="1"/>
</dbReference>
<dbReference type="PROSITE" id="PS00973">
    <property type="entry name" value="USP_2"/>
    <property type="match status" value="1"/>
</dbReference>
<dbReference type="PROSITE" id="PS50235">
    <property type="entry name" value="USP_3"/>
    <property type="match status" value="1"/>
</dbReference>
<organism>
    <name type="scientific">Homo sapiens</name>
    <name type="common">Human</name>
    <dbReference type="NCBI Taxonomy" id="9606"/>
    <lineage>
        <taxon>Eukaryota</taxon>
        <taxon>Metazoa</taxon>
        <taxon>Chordata</taxon>
        <taxon>Craniata</taxon>
        <taxon>Vertebrata</taxon>
        <taxon>Euteleostomi</taxon>
        <taxon>Mammalia</taxon>
        <taxon>Eutheria</taxon>
        <taxon>Euarchontoglires</taxon>
        <taxon>Primates</taxon>
        <taxon>Haplorrhini</taxon>
        <taxon>Catarrhini</taxon>
        <taxon>Hominidae</taxon>
        <taxon>Homo</taxon>
    </lineage>
</organism>
<sequence length="530" mass="59687">MEEDSLYLGGEWQFNHFSKLTSSRPDAAFAEIQRTSLPEKSPLSCETRVDLCDDLAPVARQLAPREKLPLSNRRPAAVGAGLQNMGNTCYVNASLQCLTYTPPLANYMLSREHSQTCHRHKGCMLCTMQAHITRALHNPGHVIQPSQALAAGFHRGKQEDAHEFLMFTVDAMKKACLPGHKQVDHHSKDTTLIHQIFGGYWRSQIKCLHCHGISDTFDPYLDIALDIQAAQSVQQALEQLVKPEELNGENAYHCGVCLQRAPASKMLTLLTSAKVLILVLKRFSDVTGNKIAKNVQYPECLDMQPYMSQPNTGPLVYVLYAVLVHAGWSCHNGHYFSYVKAQEGQWYKMDDAEVTASSITSVLSQQAYVLFYIQKSEWERHSESVSRGREPRALGAEDTDRRATQGELKRDHPCLQAPELDEHLVERATQESTLDHWKFLQEQNKTKPEFNVRKVEGTLPPDVLVIHQSKYKCGMKNHHPEQQSSLLKLSSTTPTHQESMNTGTLASLRGRARRSKGKNKHSKRALLVCQ</sequence>